<name>PTF1A_DANRE</name>
<dbReference type="EMBL" id="AY245546">
    <property type="protein sequence ID" value="AAO92259.1"/>
    <property type="molecule type" value="mRNA"/>
</dbReference>
<dbReference type="EMBL" id="AL845362">
    <property type="protein sequence ID" value="CAD60845.1"/>
    <property type="molecule type" value="Genomic_DNA"/>
</dbReference>
<dbReference type="EMBL" id="BC093269">
    <property type="protein sequence ID" value="AAH93269.1"/>
    <property type="molecule type" value="mRNA"/>
</dbReference>
<dbReference type="RefSeq" id="NP_997524.1">
    <property type="nucleotide sequence ID" value="NM_207641.2"/>
</dbReference>
<dbReference type="SMR" id="Q7ZSX3"/>
<dbReference type="FunCoup" id="Q7ZSX3">
    <property type="interactions" value="491"/>
</dbReference>
<dbReference type="STRING" id="7955.ENSDARP00000011265"/>
<dbReference type="PaxDb" id="7955-ENSDARP00000011265"/>
<dbReference type="Ensembl" id="ENSDART00000021987">
    <property type="protein sequence ID" value="ENSDARP00000011265"/>
    <property type="gene ID" value="ENSDARG00000014479"/>
</dbReference>
<dbReference type="GeneID" id="368662"/>
<dbReference type="KEGG" id="dre:368662"/>
<dbReference type="AGR" id="ZFIN:ZDB-GENE-030616-579"/>
<dbReference type="CTD" id="256297"/>
<dbReference type="ZFIN" id="ZDB-GENE-030616-579">
    <property type="gene designation" value="ptf1a"/>
</dbReference>
<dbReference type="eggNOG" id="KOG4029">
    <property type="taxonomic scope" value="Eukaryota"/>
</dbReference>
<dbReference type="HOGENOM" id="CLU_053709_0_0_1"/>
<dbReference type="InParanoid" id="Q7ZSX3"/>
<dbReference type="OMA" id="GYCCEAA"/>
<dbReference type="OrthoDB" id="10048995at2759"/>
<dbReference type="PhylomeDB" id="Q7ZSX3"/>
<dbReference type="TreeFam" id="TF315153"/>
<dbReference type="PRO" id="PR:Q7ZSX3"/>
<dbReference type="Proteomes" id="UP000000437">
    <property type="component" value="Chromosome 2"/>
</dbReference>
<dbReference type="Bgee" id="ENSDARG00000014479">
    <property type="expression patterns" value="Expressed in pancreatic system and 21 other cell types or tissues"/>
</dbReference>
<dbReference type="GO" id="GO:0005737">
    <property type="term" value="C:cytoplasm"/>
    <property type="evidence" value="ECO:0000250"/>
    <property type="project" value="UniProtKB"/>
</dbReference>
<dbReference type="GO" id="GO:0005634">
    <property type="term" value="C:nucleus"/>
    <property type="evidence" value="ECO:0000250"/>
    <property type="project" value="UniProtKB"/>
</dbReference>
<dbReference type="GO" id="GO:0005667">
    <property type="term" value="C:transcription regulator complex"/>
    <property type="evidence" value="ECO:0000250"/>
    <property type="project" value="UniProtKB"/>
</dbReference>
<dbReference type="GO" id="GO:0003677">
    <property type="term" value="F:DNA binding"/>
    <property type="evidence" value="ECO:0000250"/>
    <property type="project" value="UniProtKB"/>
</dbReference>
<dbReference type="GO" id="GO:0003700">
    <property type="term" value="F:DNA-binding transcription factor activity"/>
    <property type="evidence" value="ECO:0000316"/>
    <property type="project" value="ZFIN"/>
</dbReference>
<dbReference type="GO" id="GO:0000981">
    <property type="term" value="F:DNA-binding transcription factor activity, RNA polymerase II-specific"/>
    <property type="evidence" value="ECO:0000318"/>
    <property type="project" value="GO_Central"/>
</dbReference>
<dbReference type="GO" id="GO:0046983">
    <property type="term" value="F:protein dimerization activity"/>
    <property type="evidence" value="ECO:0007669"/>
    <property type="project" value="InterPro"/>
</dbReference>
<dbReference type="GO" id="GO:0000977">
    <property type="term" value="F:RNA polymerase II transcription regulatory region sequence-specific DNA binding"/>
    <property type="evidence" value="ECO:0000318"/>
    <property type="project" value="GO_Central"/>
</dbReference>
<dbReference type="GO" id="GO:0043565">
    <property type="term" value="F:sequence-specific DNA binding"/>
    <property type="evidence" value="ECO:0000353"/>
    <property type="project" value="ZFIN"/>
</dbReference>
<dbReference type="GO" id="GO:0035881">
    <property type="term" value="P:amacrine cell differentiation"/>
    <property type="evidence" value="ECO:0000315"/>
    <property type="project" value="ZFIN"/>
</dbReference>
<dbReference type="GO" id="GO:0009887">
    <property type="term" value="P:animal organ morphogenesis"/>
    <property type="evidence" value="ECO:0000315"/>
    <property type="project" value="ZFIN"/>
</dbReference>
<dbReference type="GO" id="GO:0030154">
    <property type="term" value="P:cell differentiation"/>
    <property type="evidence" value="ECO:0000315"/>
    <property type="project" value="ZFIN"/>
</dbReference>
<dbReference type="GO" id="GO:0032502">
    <property type="term" value="P:developmental process"/>
    <property type="evidence" value="ECO:0000318"/>
    <property type="project" value="GO_Central"/>
</dbReference>
<dbReference type="GO" id="GO:0031017">
    <property type="term" value="P:exocrine pancreas development"/>
    <property type="evidence" value="ECO:0000315"/>
    <property type="project" value="ZFIN"/>
</dbReference>
<dbReference type="GO" id="GO:0048699">
    <property type="term" value="P:generation of neurons"/>
    <property type="evidence" value="ECO:0000250"/>
    <property type="project" value="UniProtKB"/>
</dbReference>
<dbReference type="GO" id="GO:0030902">
    <property type="term" value="P:hindbrain development"/>
    <property type="evidence" value="ECO:0000250"/>
    <property type="project" value="UniProtKB"/>
</dbReference>
<dbReference type="GO" id="GO:0048666">
    <property type="term" value="P:neuron development"/>
    <property type="evidence" value="ECO:0000315"/>
    <property type="project" value="ZFIN"/>
</dbReference>
<dbReference type="GO" id="GO:0031016">
    <property type="term" value="P:pancreas development"/>
    <property type="evidence" value="ECO:0000315"/>
    <property type="project" value="ZFIN"/>
</dbReference>
<dbReference type="GO" id="GO:0045893">
    <property type="term" value="P:positive regulation of DNA-templated transcription"/>
    <property type="evidence" value="ECO:0000316"/>
    <property type="project" value="ZFIN"/>
</dbReference>
<dbReference type="GO" id="GO:0006355">
    <property type="term" value="P:regulation of DNA-templated transcription"/>
    <property type="evidence" value="ECO:0000250"/>
    <property type="project" value="UniProtKB"/>
</dbReference>
<dbReference type="GO" id="GO:0006357">
    <property type="term" value="P:regulation of transcription by RNA polymerase II"/>
    <property type="evidence" value="ECO:0000318"/>
    <property type="project" value="GO_Central"/>
</dbReference>
<dbReference type="GO" id="GO:0048384">
    <property type="term" value="P:retinoic acid receptor signaling pathway"/>
    <property type="evidence" value="ECO:0000250"/>
    <property type="project" value="UniProtKB"/>
</dbReference>
<dbReference type="GO" id="GO:0009888">
    <property type="term" value="P:tissue development"/>
    <property type="evidence" value="ECO:0000250"/>
    <property type="project" value="UniProtKB"/>
</dbReference>
<dbReference type="CDD" id="cd11417">
    <property type="entry name" value="bHLH_TS_PTF1A"/>
    <property type="match status" value="1"/>
</dbReference>
<dbReference type="FunFam" id="4.10.280.10:FF:000035">
    <property type="entry name" value="Pancreas-specific transcription factor 1a"/>
    <property type="match status" value="1"/>
</dbReference>
<dbReference type="Gene3D" id="4.10.280.10">
    <property type="entry name" value="Helix-loop-helix DNA-binding domain"/>
    <property type="match status" value="1"/>
</dbReference>
<dbReference type="InterPro" id="IPR011598">
    <property type="entry name" value="bHLH_dom"/>
</dbReference>
<dbReference type="InterPro" id="IPR050283">
    <property type="entry name" value="E-box_TF_Regulators"/>
</dbReference>
<dbReference type="InterPro" id="IPR036638">
    <property type="entry name" value="HLH_DNA-bd_sf"/>
</dbReference>
<dbReference type="PANTHER" id="PTHR23349">
    <property type="entry name" value="BASIC HELIX-LOOP-HELIX TRANSCRIPTION FACTOR, TWIST"/>
    <property type="match status" value="1"/>
</dbReference>
<dbReference type="PANTHER" id="PTHR23349:SF59">
    <property type="entry name" value="PANCREAS TRANSCRIPTION FACTOR 1 SUBUNIT ALPHA"/>
    <property type="match status" value="1"/>
</dbReference>
<dbReference type="Pfam" id="PF00010">
    <property type="entry name" value="HLH"/>
    <property type="match status" value="1"/>
</dbReference>
<dbReference type="SMART" id="SM00353">
    <property type="entry name" value="HLH"/>
    <property type="match status" value="1"/>
</dbReference>
<dbReference type="SUPFAM" id="SSF47459">
    <property type="entry name" value="HLH, helix-loop-helix DNA-binding domain"/>
    <property type="match status" value="1"/>
</dbReference>
<dbReference type="PROSITE" id="PS50888">
    <property type="entry name" value="BHLH"/>
    <property type="match status" value="1"/>
</dbReference>
<sequence length="265" mass="30447">MDTVLDPFTGLDSFSSSYFDDDDFFTDHSSRDHLDTDDFLDEDVDFLTNQIQEYYKDSRISQDGDYCDVGNFSFSSSSSTFSYGCADSTSELSPHRDGGLLKRRRRMRSEVEMQQLRQAANVRERRRMQSINDAFEGLRSHIPTLPYEKRLSKVDTLRLAIGYINFLAELVQSDMPIRNPHSDALNQPKKVIICHRGTRSPSPNDPDYGLPPLAGHSLSWTDEKQLKDQNIIRTAKVWTPEDPRKLHLKSSINNIENEPPFNFIS</sequence>
<accession>Q7ZSX3</accession>
<proteinExistence type="evidence at transcript level"/>
<protein>
    <recommendedName>
        <fullName>Pancreas transcription factor 1 subunit alpha</fullName>
    </recommendedName>
    <alternativeName>
        <fullName>Pancreas-specific transcription factor 1a</fullName>
    </alternativeName>
    <alternativeName>
        <fullName>bHLH transcription factor p48</fullName>
    </alternativeName>
</protein>
<organism>
    <name type="scientific">Danio rerio</name>
    <name type="common">Zebrafish</name>
    <name type="synonym">Brachydanio rerio</name>
    <dbReference type="NCBI Taxonomy" id="7955"/>
    <lineage>
        <taxon>Eukaryota</taxon>
        <taxon>Metazoa</taxon>
        <taxon>Chordata</taxon>
        <taxon>Craniata</taxon>
        <taxon>Vertebrata</taxon>
        <taxon>Euteleostomi</taxon>
        <taxon>Actinopterygii</taxon>
        <taxon>Neopterygii</taxon>
        <taxon>Teleostei</taxon>
        <taxon>Ostariophysi</taxon>
        <taxon>Cypriniformes</taxon>
        <taxon>Danionidae</taxon>
        <taxon>Danioninae</taxon>
        <taxon>Danio</taxon>
    </lineage>
</organism>
<feature type="chain" id="PRO_0000233146" description="Pancreas transcription factor 1 subunit alpha">
    <location>
        <begin position="1"/>
        <end position="265"/>
    </location>
</feature>
<feature type="domain" description="bHLH" evidence="1">
    <location>
        <begin position="115"/>
        <end position="167"/>
    </location>
</feature>
<reference key="1">
    <citation type="journal article" date="2004" name="Dev. Biol.">
        <title>Differential requirement for ptf1a in endocrine and exocrine lineages of developing zebrafish pancreas.</title>
        <authorList>
            <person name="Lin J.W."/>
            <person name="Biankin A.V."/>
            <person name="Horb M.E."/>
            <person name="Ghosh B."/>
            <person name="Prasad N.B."/>
            <person name="Yee N.S."/>
            <person name="Pack M.A."/>
            <person name="Leach S.D."/>
        </authorList>
    </citation>
    <scope>NUCLEOTIDE SEQUENCE [MRNA]</scope>
    <scope>FUNCTION</scope>
    <scope>DEVELOPMENTAL STAGE</scope>
</reference>
<reference key="2">
    <citation type="journal article" date="2013" name="Nature">
        <title>The zebrafish reference genome sequence and its relationship to the human genome.</title>
        <authorList>
            <person name="Howe K."/>
            <person name="Clark M.D."/>
            <person name="Torroja C.F."/>
            <person name="Torrance J."/>
            <person name="Berthelot C."/>
            <person name="Muffato M."/>
            <person name="Collins J.E."/>
            <person name="Humphray S."/>
            <person name="McLaren K."/>
            <person name="Matthews L."/>
            <person name="McLaren S."/>
            <person name="Sealy I."/>
            <person name="Caccamo M."/>
            <person name="Churcher C."/>
            <person name="Scott C."/>
            <person name="Barrett J.C."/>
            <person name="Koch R."/>
            <person name="Rauch G.J."/>
            <person name="White S."/>
            <person name="Chow W."/>
            <person name="Kilian B."/>
            <person name="Quintais L.T."/>
            <person name="Guerra-Assuncao J.A."/>
            <person name="Zhou Y."/>
            <person name="Gu Y."/>
            <person name="Yen J."/>
            <person name="Vogel J.H."/>
            <person name="Eyre T."/>
            <person name="Redmond S."/>
            <person name="Banerjee R."/>
            <person name="Chi J."/>
            <person name="Fu B."/>
            <person name="Langley E."/>
            <person name="Maguire S.F."/>
            <person name="Laird G.K."/>
            <person name="Lloyd D."/>
            <person name="Kenyon E."/>
            <person name="Donaldson S."/>
            <person name="Sehra H."/>
            <person name="Almeida-King J."/>
            <person name="Loveland J."/>
            <person name="Trevanion S."/>
            <person name="Jones M."/>
            <person name="Quail M."/>
            <person name="Willey D."/>
            <person name="Hunt A."/>
            <person name="Burton J."/>
            <person name="Sims S."/>
            <person name="McLay K."/>
            <person name="Plumb B."/>
            <person name="Davis J."/>
            <person name="Clee C."/>
            <person name="Oliver K."/>
            <person name="Clark R."/>
            <person name="Riddle C."/>
            <person name="Elliot D."/>
            <person name="Threadgold G."/>
            <person name="Harden G."/>
            <person name="Ware D."/>
            <person name="Begum S."/>
            <person name="Mortimore B."/>
            <person name="Kerry G."/>
            <person name="Heath P."/>
            <person name="Phillimore B."/>
            <person name="Tracey A."/>
            <person name="Corby N."/>
            <person name="Dunn M."/>
            <person name="Johnson C."/>
            <person name="Wood J."/>
            <person name="Clark S."/>
            <person name="Pelan S."/>
            <person name="Griffiths G."/>
            <person name="Smith M."/>
            <person name="Glithero R."/>
            <person name="Howden P."/>
            <person name="Barker N."/>
            <person name="Lloyd C."/>
            <person name="Stevens C."/>
            <person name="Harley J."/>
            <person name="Holt K."/>
            <person name="Panagiotidis G."/>
            <person name="Lovell J."/>
            <person name="Beasley H."/>
            <person name="Henderson C."/>
            <person name="Gordon D."/>
            <person name="Auger K."/>
            <person name="Wright D."/>
            <person name="Collins J."/>
            <person name="Raisen C."/>
            <person name="Dyer L."/>
            <person name="Leung K."/>
            <person name="Robertson L."/>
            <person name="Ambridge K."/>
            <person name="Leongamornlert D."/>
            <person name="McGuire S."/>
            <person name="Gilderthorp R."/>
            <person name="Griffiths C."/>
            <person name="Manthravadi D."/>
            <person name="Nichol S."/>
            <person name="Barker G."/>
            <person name="Whitehead S."/>
            <person name="Kay M."/>
            <person name="Brown J."/>
            <person name="Murnane C."/>
            <person name="Gray E."/>
            <person name="Humphries M."/>
            <person name="Sycamore N."/>
            <person name="Barker D."/>
            <person name="Saunders D."/>
            <person name="Wallis J."/>
            <person name="Babbage A."/>
            <person name="Hammond S."/>
            <person name="Mashreghi-Mohammadi M."/>
            <person name="Barr L."/>
            <person name="Martin S."/>
            <person name="Wray P."/>
            <person name="Ellington A."/>
            <person name="Matthews N."/>
            <person name="Ellwood M."/>
            <person name="Woodmansey R."/>
            <person name="Clark G."/>
            <person name="Cooper J."/>
            <person name="Tromans A."/>
            <person name="Grafham D."/>
            <person name="Skuce C."/>
            <person name="Pandian R."/>
            <person name="Andrews R."/>
            <person name="Harrison E."/>
            <person name="Kimberley A."/>
            <person name="Garnett J."/>
            <person name="Fosker N."/>
            <person name="Hall R."/>
            <person name="Garner P."/>
            <person name="Kelly D."/>
            <person name="Bird C."/>
            <person name="Palmer S."/>
            <person name="Gehring I."/>
            <person name="Berger A."/>
            <person name="Dooley C.M."/>
            <person name="Ersan-Urun Z."/>
            <person name="Eser C."/>
            <person name="Geiger H."/>
            <person name="Geisler M."/>
            <person name="Karotki L."/>
            <person name="Kirn A."/>
            <person name="Konantz J."/>
            <person name="Konantz M."/>
            <person name="Oberlander M."/>
            <person name="Rudolph-Geiger S."/>
            <person name="Teucke M."/>
            <person name="Lanz C."/>
            <person name="Raddatz G."/>
            <person name="Osoegawa K."/>
            <person name="Zhu B."/>
            <person name="Rapp A."/>
            <person name="Widaa S."/>
            <person name="Langford C."/>
            <person name="Yang F."/>
            <person name="Schuster S.C."/>
            <person name="Carter N.P."/>
            <person name="Harrow J."/>
            <person name="Ning Z."/>
            <person name="Herrero J."/>
            <person name="Searle S.M."/>
            <person name="Enright A."/>
            <person name="Geisler R."/>
            <person name="Plasterk R.H."/>
            <person name="Lee C."/>
            <person name="Westerfield M."/>
            <person name="de Jong P.J."/>
            <person name="Zon L.I."/>
            <person name="Postlethwait J.H."/>
            <person name="Nusslein-Volhard C."/>
            <person name="Hubbard T.J."/>
            <person name="Roest Crollius H."/>
            <person name="Rogers J."/>
            <person name="Stemple D.L."/>
        </authorList>
    </citation>
    <scope>NUCLEOTIDE SEQUENCE [LARGE SCALE GENOMIC DNA]</scope>
    <source>
        <strain>Tuebingen</strain>
    </source>
</reference>
<reference key="3">
    <citation type="submission" date="2005-04" db="EMBL/GenBank/DDBJ databases">
        <authorList>
            <consortium name="NIH - Zebrafish Gene Collection (ZGC) project"/>
        </authorList>
    </citation>
    <scope>NUCLEOTIDE SEQUENCE [LARGE SCALE MRNA]</scope>
    <source>
        <tissue>Larva</tissue>
    </source>
</reference>
<evidence type="ECO:0000255" key="1">
    <source>
        <dbReference type="PROSITE-ProRule" id="PRU00981"/>
    </source>
</evidence>
<evidence type="ECO:0000269" key="2">
    <source>
    </source>
</evidence>
<keyword id="KW-0238">DNA-binding</keyword>
<keyword id="KW-0539">Nucleus</keyword>
<keyword id="KW-1185">Reference proteome</keyword>
<keyword id="KW-0804">Transcription</keyword>
<keyword id="KW-0805">Transcription regulation</keyword>
<gene>
    <name type="primary">ptf1a</name>
    <name type="ORF">si:zc142h2.2</name>
    <name type="ORF">zgc:112216</name>
</gene>
<comment type="function">
    <text evidence="2">Transcription factor implicated in the cell fate determination in various organs. Binds to the E-box consensus sequence 5'-CANNTG-3'. Required for exocrine pancreatic development. Plays a central role in directing the differentiation of retinal progenitors towards horizontal and amacrine fates.</text>
</comment>
<comment type="subcellular location">
    <subcellularLocation>
        <location evidence="1">Nucleus</location>
    </subcellularLocation>
</comment>
<comment type="developmental stage">
    <text evidence="2">Expression detected 24 hpf (hours post fertilization), in developing hindbrain, most abundant in rhombomeres 2 and 3. Neural expression peaks at 48 hpf, at which point transcripts are found in the hindbrain, rhombic lip, and optic precursors. The exocrine pancreas represents a population of cells encircling the embryonic islet. At 72 hpf, expressed throughout the endodermal region corresponding to the exocrine pancreas. Expression is restricted to the exocrine pancreas following an early period of transient neural expression. Positive exocrine precursors and insulin-positive endocrine elements are both temporally and spatially segregated during embryogenesis.</text>
</comment>